<name>ATSK_ACIAD</name>
<organism>
    <name type="scientific">Acinetobacter baylyi (strain ATCC 33305 / BD413 / ADP1)</name>
    <dbReference type="NCBI Taxonomy" id="62977"/>
    <lineage>
        <taxon>Bacteria</taxon>
        <taxon>Pseudomonadati</taxon>
        <taxon>Pseudomonadota</taxon>
        <taxon>Gammaproteobacteria</taxon>
        <taxon>Moraxellales</taxon>
        <taxon>Moraxellaceae</taxon>
        <taxon>Acinetobacter</taxon>
    </lineage>
</organism>
<evidence type="ECO:0000250" key="1">
    <source>
        <dbReference type="UniProtKB" id="Q9WWU5"/>
    </source>
</evidence>
<evidence type="ECO:0000269" key="2">
    <source ref="2"/>
</evidence>
<evidence type="ECO:0000303" key="3">
    <source ref="2"/>
</evidence>
<evidence type="ECO:0000305" key="4"/>
<evidence type="ECO:0000312" key="5">
    <source>
        <dbReference type="EMBL" id="CAG68450.1"/>
    </source>
</evidence>
<protein>
    <recommendedName>
        <fullName evidence="3">Alkylsulfatase</fullName>
        <ecNumber evidence="2">1.14.11.-</ecNumber>
    </recommendedName>
</protein>
<accession>Q6FBW1</accession>
<comment type="function">
    <text evidence="2">Alpha-ketoglutarate-dependent dioxygenase that in vitro catalyzes the oxygenolytic release of sulfite from hexylsulfate.</text>
</comment>
<comment type="cofactor">
    <cofactor evidence="1">
        <name>Fe(2+)</name>
        <dbReference type="ChEBI" id="CHEBI:29033"/>
    </cofactor>
</comment>
<comment type="subunit">
    <text evidence="1">Homotetramer.</text>
</comment>
<comment type="similarity">
    <text evidence="4">Belongs to the TfdA dioxygenase family.</text>
</comment>
<keyword id="KW-0223">Dioxygenase</keyword>
<keyword id="KW-0408">Iron</keyword>
<keyword id="KW-0479">Metal-binding</keyword>
<keyword id="KW-0560">Oxidoreductase</keyword>
<reference key="1">
    <citation type="journal article" date="2004" name="Nucleic Acids Res.">
        <title>Unique features revealed by the genome sequence of Acinetobacter sp. ADP1, a versatile and naturally transformation competent bacterium.</title>
        <authorList>
            <person name="Barbe V."/>
            <person name="Vallenet D."/>
            <person name="Fonknechten N."/>
            <person name="Kreimeyer A."/>
            <person name="Oztas S."/>
            <person name="Labarre L."/>
            <person name="Cruveiller S."/>
            <person name="Robert C."/>
            <person name="Duprat S."/>
            <person name="Wincker P."/>
            <person name="Ornston L.N."/>
            <person name="Weissenbach J."/>
            <person name="Marliere P."/>
            <person name="Cohen G.N."/>
            <person name="Medigue C."/>
        </authorList>
    </citation>
    <scope>NUCLEOTIDE SEQUENCE [LARGE SCALE GENOMIC DNA]</scope>
    <source>
        <strain>ATCC 33305 / BD413 / ADP1</strain>
    </source>
</reference>
<reference key="2">
    <citation type="journal article" date="2014" name="ChemCatChem">
        <title>Synthesis of mono- and dihydroxylated amino acids with new alpha-ketoglutarate-dependent dioxygenases: biocatalytic oxidation of C-H bonds.</title>
        <authorList>
            <person name="Baud D."/>
            <person name="Saaidi P.-L."/>
            <person name="Monfleur A."/>
            <person name="Harari M."/>
            <person name="Cuccaro J."/>
            <person name="Fossey A."/>
            <person name="Besnard M."/>
            <person name="Debard A."/>
            <person name="Mariage A."/>
            <person name="Pellouin V."/>
            <person name="Petit J.-L."/>
            <person name="Salanoubat M."/>
            <person name="Weissenbach J."/>
            <person name="de Berardinis V."/>
            <person name="Zaparucha A."/>
        </authorList>
    </citation>
    <scope>FUNCTION</scope>
    <scope>CATALYTIC ACTIVITY</scope>
</reference>
<dbReference type="EC" id="1.14.11.-" evidence="2"/>
<dbReference type="EMBL" id="CR543861">
    <property type="protein sequence ID" value="CAG68450.1"/>
    <property type="molecule type" value="Genomic_DNA"/>
</dbReference>
<dbReference type="RefSeq" id="WP_004925066.1">
    <property type="nucleotide sequence ID" value="NC_005966.1"/>
</dbReference>
<dbReference type="SMR" id="Q6FBW1"/>
<dbReference type="STRING" id="202950.GCA_001485005_01981"/>
<dbReference type="GeneID" id="45233990"/>
<dbReference type="KEGG" id="aci:ACIAD1600"/>
<dbReference type="eggNOG" id="COG2175">
    <property type="taxonomic scope" value="Bacteria"/>
</dbReference>
<dbReference type="HOGENOM" id="CLU_036005_2_1_6"/>
<dbReference type="OrthoDB" id="581608at2"/>
<dbReference type="BioCyc" id="ASP62977:ACIAD_RS07345-MONOMER"/>
<dbReference type="Proteomes" id="UP000000430">
    <property type="component" value="Chromosome"/>
</dbReference>
<dbReference type="GO" id="GO:0005737">
    <property type="term" value="C:cytoplasm"/>
    <property type="evidence" value="ECO:0007669"/>
    <property type="project" value="TreeGrafter"/>
</dbReference>
<dbReference type="GO" id="GO:0016706">
    <property type="term" value="F:2-oxoglutarate-dependent dioxygenase activity"/>
    <property type="evidence" value="ECO:0000314"/>
    <property type="project" value="UniProtKB"/>
</dbReference>
<dbReference type="GO" id="GO:0046872">
    <property type="term" value="F:metal ion binding"/>
    <property type="evidence" value="ECO:0007669"/>
    <property type="project" value="UniProtKB-KW"/>
</dbReference>
<dbReference type="FunFam" id="3.60.130.10:FF:000002">
    <property type="entry name" value="Alpha-ketoglutarate-dependent taurine dioxygenase"/>
    <property type="match status" value="1"/>
</dbReference>
<dbReference type="Gene3D" id="3.60.130.10">
    <property type="entry name" value="Clavaminate synthase-like"/>
    <property type="match status" value="1"/>
</dbReference>
<dbReference type="InterPro" id="IPR051323">
    <property type="entry name" value="AtsK-like"/>
</dbReference>
<dbReference type="InterPro" id="IPR042098">
    <property type="entry name" value="TauD-like_sf"/>
</dbReference>
<dbReference type="InterPro" id="IPR003819">
    <property type="entry name" value="TauD/TfdA-like"/>
</dbReference>
<dbReference type="PANTHER" id="PTHR30468:SF5">
    <property type="entry name" value="ALPHA-KETOGLUTARATE-DEPENDENT SULFATE ESTER DIOXYGENASE"/>
    <property type="match status" value="1"/>
</dbReference>
<dbReference type="PANTHER" id="PTHR30468">
    <property type="entry name" value="ALPHA-KETOGLUTARATE-DEPENDENT SULFONATE DIOXYGENASE"/>
    <property type="match status" value="1"/>
</dbReference>
<dbReference type="Pfam" id="PF02668">
    <property type="entry name" value="TauD"/>
    <property type="match status" value="1"/>
</dbReference>
<dbReference type="SUPFAM" id="SSF51197">
    <property type="entry name" value="Clavaminate synthase-like"/>
    <property type="match status" value="1"/>
</dbReference>
<gene>
    <name evidence="3" type="primary">atsK</name>
    <name evidence="5" type="ordered locus">ACIAD1600</name>
</gene>
<feature type="chain" id="PRO_0000435698" description="Alkylsulfatase">
    <location>
        <begin position="1"/>
        <end position="317"/>
    </location>
</feature>
<feature type="binding site" evidence="1">
    <location>
        <position position="78"/>
    </location>
    <ligand>
        <name>substrate</name>
    </ligand>
</feature>
<feature type="binding site" evidence="1">
    <location>
        <position position="105"/>
    </location>
    <ligand>
        <name>Fe cation</name>
        <dbReference type="ChEBI" id="CHEBI:24875"/>
    </ligand>
</feature>
<feature type="binding site" evidence="1">
    <location>
        <position position="107"/>
    </location>
    <ligand>
        <name>Fe cation</name>
        <dbReference type="ChEBI" id="CHEBI:24875"/>
    </ligand>
</feature>
<feature type="binding site" evidence="1">
    <location>
        <position position="108"/>
    </location>
    <ligand>
        <name>substrate</name>
    </ligand>
</feature>
<feature type="binding site" evidence="1">
    <location>
        <position position="132"/>
    </location>
    <ligand>
        <name>2-oxoglutarate</name>
        <dbReference type="ChEBI" id="CHEBI:16810"/>
    </ligand>
</feature>
<feature type="binding site" evidence="1">
    <location>
        <position position="261"/>
    </location>
    <ligand>
        <name>Fe cation</name>
        <dbReference type="ChEBI" id="CHEBI:24875"/>
    </ligand>
</feature>
<feature type="binding site" evidence="1">
    <location>
        <position position="272"/>
    </location>
    <ligand>
        <name>2-oxoglutarate</name>
        <dbReference type="ChEBI" id="CHEBI:16810"/>
    </ligand>
</feature>
<feature type="binding site" evidence="1">
    <location>
        <position position="276"/>
    </location>
    <ligand>
        <name>2-oxoglutarate</name>
        <dbReference type="ChEBI" id="CHEBI:16810"/>
    </ligand>
</feature>
<proteinExistence type="evidence at protein level"/>
<sequence length="317" mass="35749">MTTFIQNPTQQLQLRKLTGRIGAEISGIHLSSELDSSTVQFIHDALLEHKVLFFRGQQHLGDTEQEKFAELFGSPVKHPTVPAADGTDFIFELDSQKGARANSWHTDVTFVDAYPKISILRGLIIPETGGDTTWANTETAYEDLPELLKQFAEQLVAVHSNEYDYGGPKQNVEPEQLERLKKVFVSTKYETEHPVVIVHPETGKKSLLLGHFFKRLVGFSQSDSQLLFNILQEKVTRPENTVRWQWQEGDVVIWDNRSTQHYAVNDYGDQHRVVRRITLAGEVTTGAHGLKGKTTLPKDLSAEQLEKAKLHAVLNAN</sequence>